<feature type="chain" id="PRO_0000325046" description="Photosystem I assembly protein Ycf3">
    <location>
        <begin position="1"/>
        <end position="173"/>
    </location>
</feature>
<feature type="repeat" description="TPR 1">
    <location>
        <begin position="35"/>
        <end position="68"/>
    </location>
</feature>
<feature type="repeat" description="TPR 2">
    <location>
        <begin position="72"/>
        <end position="105"/>
    </location>
</feature>
<feature type="repeat" description="TPR 3">
    <location>
        <begin position="120"/>
        <end position="153"/>
    </location>
</feature>
<proteinExistence type="inferred from homology"/>
<evidence type="ECO:0000255" key="1">
    <source>
        <dbReference type="HAMAP-Rule" id="MF_00439"/>
    </source>
</evidence>
<reference key="1">
    <citation type="journal article" date="2007" name="PLoS Genet.">
        <title>Patterns and implications of gene gain and loss in the evolution of Prochlorococcus.</title>
        <authorList>
            <person name="Kettler G.C."/>
            <person name="Martiny A.C."/>
            <person name="Huang K."/>
            <person name="Zucker J."/>
            <person name="Coleman M.L."/>
            <person name="Rodrigue S."/>
            <person name="Chen F."/>
            <person name="Lapidus A."/>
            <person name="Ferriera S."/>
            <person name="Johnson J."/>
            <person name="Steglich C."/>
            <person name="Church G.M."/>
            <person name="Richardson P."/>
            <person name="Chisholm S.W."/>
        </authorList>
    </citation>
    <scope>NUCLEOTIDE SEQUENCE [LARGE SCALE GENOMIC DNA]</scope>
    <source>
        <strain>NATL2A</strain>
    </source>
</reference>
<organism>
    <name type="scientific">Prochlorococcus marinus (strain NATL2A)</name>
    <dbReference type="NCBI Taxonomy" id="59920"/>
    <lineage>
        <taxon>Bacteria</taxon>
        <taxon>Bacillati</taxon>
        <taxon>Cyanobacteriota</taxon>
        <taxon>Cyanophyceae</taxon>
        <taxon>Synechococcales</taxon>
        <taxon>Prochlorococcaceae</taxon>
        <taxon>Prochlorococcus</taxon>
    </lineage>
</organism>
<keyword id="KW-0472">Membrane</keyword>
<keyword id="KW-0602">Photosynthesis</keyword>
<keyword id="KW-1185">Reference proteome</keyword>
<keyword id="KW-0677">Repeat</keyword>
<keyword id="KW-0793">Thylakoid</keyword>
<keyword id="KW-0802">TPR repeat</keyword>
<comment type="function">
    <text evidence="1">Essential for the assembly of the photosystem I (PSI) complex. May act as a chaperone-like factor to guide the assembly of the PSI subunits.</text>
</comment>
<comment type="subcellular location">
    <subcellularLocation>
        <location evidence="1">Cellular thylakoid membrane</location>
        <topology evidence="1">Peripheral membrane protein</topology>
    </subcellularLocation>
</comment>
<comment type="similarity">
    <text evidence="1">Belongs to the Ycf3 family.</text>
</comment>
<protein>
    <recommendedName>
        <fullName evidence="1">Photosystem I assembly protein Ycf3</fullName>
    </recommendedName>
</protein>
<name>YCF3_PROMT</name>
<dbReference type="EMBL" id="CP000095">
    <property type="protein sequence ID" value="AAZ58986.1"/>
    <property type="molecule type" value="Genomic_DNA"/>
</dbReference>
<dbReference type="RefSeq" id="WP_011294131.1">
    <property type="nucleotide sequence ID" value="NC_007335.2"/>
</dbReference>
<dbReference type="SMR" id="Q46HP2"/>
<dbReference type="STRING" id="59920.PMN2A_1498"/>
<dbReference type="KEGG" id="pmn:PMN2A_1498"/>
<dbReference type="HOGENOM" id="CLU_141248_0_0_3"/>
<dbReference type="OrthoDB" id="9429505at2"/>
<dbReference type="PhylomeDB" id="Q46HP2"/>
<dbReference type="Proteomes" id="UP000002535">
    <property type="component" value="Chromosome"/>
</dbReference>
<dbReference type="GO" id="GO:0031676">
    <property type="term" value="C:plasma membrane-derived thylakoid membrane"/>
    <property type="evidence" value="ECO:0007669"/>
    <property type="project" value="UniProtKB-SubCell"/>
</dbReference>
<dbReference type="GO" id="GO:0015979">
    <property type="term" value="P:photosynthesis"/>
    <property type="evidence" value="ECO:0007669"/>
    <property type="project" value="UniProtKB-UniRule"/>
</dbReference>
<dbReference type="Gene3D" id="1.25.40.10">
    <property type="entry name" value="Tetratricopeptide repeat domain"/>
    <property type="match status" value="1"/>
</dbReference>
<dbReference type="HAMAP" id="MF_00439">
    <property type="entry name" value="Ycf3"/>
    <property type="match status" value="1"/>
</dbReference>
<dbReference type="InterPro" id="IPR022818">
    <property type="entry name" value="PSI_Ycf3_assembly"/>
</dbReference>
<dbReference type="InterPro" id="IPR011990">
    <property type="entry name" value="TPR-like_helical_dom_sf"/>
</dbReference>
<dbReference type="InterPro" id="IPR019734">
    <property type="entry name" value="TPR_rpt"/>
</dbReference>
<dbReference type="InterPro" id="IPR051685">
    <property type="entry name" value="Ycf3/AcsC/BcsC/TPR_MFPF"/>
</dbReference>
<dbReference type="NCBIfam" id="NF002725">
    <property type="entry name" value="PRK02603.1"/>
    <property type="match status" value="1"/>
</dbReference>
<dbReference type="PANTHER" id="PTHR44943">
    <property type="entry name" value="CELLULOSE SYNTHASE OPERON PROTEIN C"/>
    <property type="match status" value="1"/>
</dbReference>
<dbReference type="PANTHER" id="PTHR44943:SF8">
    <property type="entry name" value="TPR REPEAT-CONTAINING PROTEIN MJ0263"/>
    <property type="match status" value="1"/>
</dbReference>
<dbReference type="Pfam" id="PF13424">
    <property type="entry name" value="TPR_12"/>
    <property type="match status" value="1"/>
</dbReference>
<dbReference type="SMART" id="SM00028">
    <property type="entry name" value="TPR"/>
    <property type="match status" value="3"/>
</dbReference>
<dbReference type="SUPFAM" id="SSF48452">
    <property type="entry name" value="TPR-like"/>
    <property type="match status" value="1"/>
</dbReference>
<dbReference type="PROSITE" id="PS50005">
    <property type="entry name" value="TPR"/>
    <property type="match status" value="2"/>
</dbReference>
<dbReference type="PROSITE" id="PS50293">
    <property type="entry name" value="TPR_REGION"/>
    <property type="match status" value="1"/>
</dbReference>
<sequence>MPRSQNKDNFLDKAFTKMAEGIVKVMPIDSKEKEAYLYYRKGLAAQNDGDYSEALEYYEESLKLEDNQVDRGETLKNMAIIYMSNGDEERAINTYKKALGQNPKQPSCLKNMGLIYEKRGRMAQRNGNQDECDIWFDQAAEVWSKAVRLYPGGYLDIENWLKTTGRGNVDVYL</sequence>
<accession>Q46HP2</accession>
<gene>
    <name evidence="1" type="primary">ycf3</name>
    <name type="ordered locus">PMN2A_1498</name>
</gene>